<accession>Q9FK13</accession>
<accession>Q8LBC3</accession>
<protein>
    <recommendedName>
        <fullName evidence="9">Plastid division protein PDV1</fullName>
    </recommendedName>
    <alternativeName>
        <fullName evidence="9">Protein PLASTID DIVISION1</fullName>
    </alternativeName>
</protein>
<organism>
    <name type="scientific">Arabidopsis thaliana</name>
    <name type="common">Mouse-ear cress</name>
    <dbReference type="NCBI Taxonomy" id="3702"/>
    <lineage>
        <taxon>Eukaryota</taxon>
        <taxon>Viridiplantae</taxon>
        <taxon>Streptophyta</taxon>
        <taxon>Embryophyta</taxon>
        <taxon>Tracheophyta</taxon>
        <taxon>Spermatophyta</taxon>
        <taxon>Magnoliopsida</taxon>
        <taxon>eudicotyledons</taxon>
        <taxon>Gunneridae</taxon>
        <taxon>Pentapetalae</taxon>
        <taxon>rosids</taxon>
        <taxon>malvids</taxon>
        <taxon>Brassicales</taxon>
        <taxon>Brassicaceae</taxon>
        <taxon>Camelineae</taxon>
        <taxon>Arabidopsis</taxon>
    </lineage>
</organism>
<proteinExistence type="evidence at protein level"/>
<comment type="function">
    <text evidence="3 6 8">Component of the plastid division machinery (PubMed:16998069). Required to mediate the dissociation of ARC5/DRP5B from plastid outer envelope membranes (OEMs) at the midplastid constriction site in the cytoplasm, thus triggering ARC5/DRP5B ring turnover at the chloroplast division site (PubMed:16998069, PubMed:32005784). Binding to phosphatidylinositol 4-phosphate (PI4P) modulates negatively chloroplast division (PubMed:25736058).</text>
</comment>
<comment type="subunit">
    <text evidence="7 8">Interacts (via C-terminus) with CDP1/PARC6 (via C-terminus) (PubMed:26527658). Interacts with ARC5/DRP5B (PubMed:32005784).</text>
</comment>
<comment type="subcellular location">
    <subcellularLocation>
        <location evidence="3 4 8">Plastid</location>
        <location evidence="3 4 8">Chloroplast outer membrane</location>
        <topology evidence="3 4">Single-pass membrane protein</topology>
    </subcellularLocation>
    <text evidence="3 4 8">Plastid equatorial positioning in a discontinuous ring mediated by CDP1 (PubMed:16998069, PubMed:19453460). Colocalizes with ARC5/DRP5B at the chloroplast division site (PubMed:32005784).</text>
</comment>
<comment type="tissue specificity">
    <text evidence="3">Expressed in young developing leaves, root tips, shoot apices, and flower buds (sepals, petals, stamens, and pistils), but not in developed tissues.</text>
</comment>
<comment type="induction">
    <text evidence="5">Induced by gibberellic acid (GA).</text>
</comment>
<comment type="disruption phenotype">
    <text evidence="3 8">Reduced number of constricted and large chloroplasts due to a blocked plastid division (PubMed:16998069, PubMed:32005784). Accumulation of ARC5/DRP5B in the plastid outer envelope membranes (OEMs) at the midplastid constriction site in the cytoplasm (PubMed:32005784).</text>
</comment>
<comment type="sequence caution" evidence="10">
    <conflict type="erroneous initiation">
        <sequence resource="EMBL-CDS" id="AAM64850"/>
    </conflict>
    <text>Truncated N-terminus.</text>
</comment>
<evidence type="ECO:0000255" key="1"/>
<evidence type="ECO:0000256" key="2">
    <source>
        <dbReference type="SAM" id="MobiDB-lite"/>
    </source>
</evidence>
<evidence type="ECO:0000269" key="3">
    <source>
    </source>
</evidence>
<evidence type="ECO:0000269" key="4">
    <source>
    </source>
</evidence>
<evidence type="ECO:0000269" key="5">
    <source>
    </source>
</evidence>
<evidence type="ECO:0000269" key="6">
    <source>
    </source>
</evidence>
<evidence type="ECO:0000269" key="7">
    <source>
    </source>
</evidence>
<evidence type="ECO:0000269" key="8">
    <source>
    </source>
</evidence>
<evidence type="ECO:0000303" key="9">
    <source>
    </source>
</evidence>
<evidence type="ECO:0000305" key="10"/>
<evidence type="ECO:0000312" key="11">
    <source>
        <dbReference type="Araport" id="AT5G53280"/>
    </source>
</evidence>
<evidence type="ECO:0000312" key="12">
    <source>
        <dbReference type="EMBL" id="BAB09790.1"/>
    </source>
</evidence>
<evidence type="ECO:0007829" key="13">
    <source>
        <dbReference type="PDB" id="6JZN"/>
    </source>
</evidence>
<name>PDV1_ARATH</name>
<keyword id="KW-0002">3D-structure</keyword>
<keyword id="KW-0150">Chloroplast</keyword>
<keyword id="KW-0175">Coiled coil</keyword>
<keyword id="KW-0472">Membrane</keyword>
<keyword id="KW-0934">Plastid</keyword>
<keyword id="KW-1002">Plastid outer membrane</keyword>
<keyword id="KW-1185">Reference proteome</keyword>
<keyword id="KW-0812">Transmembrane</keyword>
<keyword id="KW-1133">Transmembrane helix</keyword>
<feature type="chain" id="PRO_0000406943" description="Plastid division protein PDV1">
    <location>
        <begin position="1"/>
        <end position="272"/>
    </location>
</feature>
<feature type="topological domain" description="Cytoplasmic" evidence="1">
    <location>
        <begin position="1"/>
        <end position="206"/>
    </location>
</feature>
<feature type="transmembrane region" description="Helical" evidence="1">
    <location>
        <begin position="207"/>
        <end position="225"/>
    </location>
</feature>
<feature type="topological domain" description="Chloroplast intermembrane" evidence="1">
    <location>
        <begin position="226"/>
        <end position="272"/>
    </location>
</feature>
<feature type="region of interest" description="Disordered" evidence="2">
    <location>
        <begin position="40"/>
        <end position="61"/>
    </location>
</feature>
<feature type="coiled-coil region" evidence="1">
    <location>
        <begin position="78"/>
        <end position="102"/>
    </location>
</feature>
<feature type="mutagenesis site" description="In pdv1-2; reduced number of constricted and large chloroplasts, impaired subchloroplastic localization to the division site in the plastid outermembrane. Impaired interaction with CDP1/PARC6." evidence="3 7">
    <original>G</original>
    <variation>D</variation>
    <location>
        <position position="272"/>
    </location>
</feature>
<feature type="sequence conflict" description="In Ref. 4; AAM64850." evidence="10" ref="4">
    <original>N</original>
    <variation>T</variation>
    <location>
        <position position="154"/>
    </location>
</feature>
<feature type="sequence conflict" description="In Ref. 4; AAM64850." evidence="10" ref="4">
    <original>IPDGIE</original>
    <variation>TPYGIK</variation>
    <location>
        <begin position="176"/>
        <end position="181"/>
    </location>
</feature>
<feature type="sequence conflict" description="In Ref. 4; AAM64850." evidence="10" ref="4">
    <original>A</original>
    <variation>S</variation>
    <location>
        <position position="188"/>
    </location>
</feature>
<feature type="sequence conflict" description="In Ref. 4; AAM64850." evidence="10" ref="4">
    <original>A</original>
    <variation>T</variation>
    <location>
        <position position="216"/>
    </location>
</feature>
<feature type="sequence conflict" description="In Ref. 4; AAM64850." evidence="10" ref="4">
    <original>A</original>
    <variation>G</variation>
    <location>
        <position position="258"/>
    </location>
</feature>
<feature type="helix" evidence="13">
    <location>
        <begin position="267"/>
        <end position="270"/>
    </location>
</feature>
<dbReference type="EMBL" id="AB252216">
    <property type="protein sequence ID" value="BAF36494.1"/>
    <property type="molecule type" value="Genomic_DNA"/>
</dbReference>
<dbReference type="EMBL" id="AB252218">
    <property type="protein sequence ID" value="BAF36496.1"/>
    <property type="molecule type" value="mRNA"/>
</dbReference>
<dbReference type="EMBL" id="AB013388">
    <property type="protein sequence ID" value="BAB09790.1"/>
    <property type="molecule type" value="Genomic_DNA"/>
</dbReference>
<dbReference type="EMBL" id="CP002688">
    <property type="protein sequence ID" value="AED96332.1"/>
    <property type="molecule type" value="Genomic_DNA"/>
</dbReference>
<dbReference type="EMBL" id="AY087298">
    <property type="protein sequence ID" value="AAM64850.1"/>
    <property type="status" value="ALT_INIT"/>
    <property type="molecule type" value="mRNA"/>
</dbReference>
<dbReference type="EMBL" id="AK221634">
    <property type="protein sequence ID" value="BAD95268.1"/>
    <property type="molecule type" value="mRNA"/>
</dbReference>
<dbReference type="EMBL" id="BT024498">
    <property type="protein sequence ID" value="ABD19679.1"/>
    <property type="molecule type" value="mRNA"/>
</dbReference>
<dbReference type="RefSeq" id="NP_200140.1">
    <property type="nucleotide sequence ID" value="NM_124707.4"/>
</dbReference>
<dbReference type="PDB" id="5U9O">
    <property type="method" value="X-ray"/>
    <property type="resolution" value="3.37 A"/>
    <property type="chains" value="A/B/C/D/E/F/G/H=248-272"/>
</dbReference>
<dbReference type="PDB" id="6JZN">
    <property type="method" value="X-ray"/>
    <property type="resolution" value="2.89 A"/>
    <property type="chains" value="E/F/G/H=263-272"/>
</dbReference>
<dbReference type="PDBsum" id="5U9O"/>
<dbReference type="PDBsum" id="6JZN"/>
<dbReference type="SMR" id="Q9FK13"/>
<dbReference type="BioGRID" id="20654">
    <property type="interactions" value="4"/>
</dbReference>
<dbReference type="FunCoup" id="Q9FK13">
    <property type="interactions" value="402"/>
</dbReference>
<dbReference type="IntAct" id="Q9FK13">
    <property type="interactions" value="1"/>
</dbReference>
<dbReference type="STRING" id="3702.Q9FK13"/>
<dbReference type="iPTMnet" id="Q9FK13"/>
<dbReference type="PaxDb" id="3702-AT5G53280.1"/>
<dbReference type="ProteomicsDB" id="251215"/>
<dbReference type="DNASU" id="835409"/>
<dbReference type="EnsemblPlants" id="AT5G53280.1">
    <property type="protein sequence ID" value="AT5G53280.1"/>
    <property type="gene ID" value="AT5G53280"/>
</dbReference>
<dbReference type="GeneID" id="835409"/>
<dbReference type="Gramene" id="AT5G53280.1">
    <property type="protein sequence ID" value="AT5G53280.1"/>
    <property type="gene ID" value="AT5G53280"/>
</dbReference>
<dbReference type="KEGG" id="ath:AT5G53280"/>
<dbReference type="Araport" id="AT5G53280"/>
<dbReference type="TAIR" id="AT5G53280">
    <property type="gene designation" value="PDV1"/>
</dbReference>
<dbReference type="eggNOG" id="ENOG502R53V">
    <property type="taxonomic scope" value="Eukaryota"/>
</dbReference>
<dbReference type="HOGENOM" id="CLU_054471_0_0_1"/>
<dbReference type="InParanoid" id="Q9FK13"/>
<dbReference type="OMA" id="PAMEYRK"/>
<dbReference type="PhylomeDB" id="Q9FK13"/>
<dbReference type="PRO" id="PR:Q9FK13"/>
<dbReference type="Proteomes" id="UP000006548">
    <property type="component" value="Chromosome 5"/>
</dbReference>
<dbReference type="ExpressionAtlas" id="Q9FK13">
    <property type="expression patterns" value="baseline and differential"/>
</dbReference>
<dbReference type="GO" id="GO:0009707">
    <property type="term" value="C:chloroplast outer membrane"/>
    <property type="evidence" value="ECO:0000314"/>
    <property type="project" value="UniProtKB"/>
</dbReference>
<dbReference type="GO" id="GO:0070273">
    <property type="term" value="F:phosphatidylinositol-4-phosphate binding"/>
    <property type="evidence" value="ECO:0000314"/>
    <property type="project" value="UniProtKB"/>
</dbReference>
<dbReference type="GO" id="GO:0010020">
    <property type="term" value="P:chloroplast fission"/>
    <property type="evidence" value="ECO:0000315"/>
    <property type="project" value="UniProtKB"/>
</dbReference>
<dbReference type="GO" id="GO:0009739">
    <property type="term" value="P:response to gibberellin"/>
    <property type="evidence" value="ECO:0000270"/>
    <property type="project" value="UniProtKB"/>
</dbReference>
<dbReference type="InterPro" id="IPR038939">
    <property type="entry name" value="PDV1/PDV2"/>
</dbReference>
<dbReference type="PANTHER" id="PTHR33600:SF4">
    <property type="entry name" value="PLASTID DIVISION PROTEIN PDV1"/>
    <property type="match status" value="1"/>
</dbReference>
<dbReference type="PANTHER" id="PTHR33600">
    <property type="entry name" value="PLASTID DIVISION PROTEIN PDV2"/>
    <property type="match status" value="1"/>
</dbReference>
<reference key="1">
    <citation type="journal article" date="2006" name="Plant Cell">
        <title>PDV1 and PDV2 mediate recruitment of the dynamin-related protein ARC5 to the plastid division site.</title>
        <authorList>
            <person name="Miyagishima S.-Y."/>
            <person name="Froehlich J.E."/>
            <person name="Osteryoung K.W."/>
        </authorList>
    </citation>
    <scope>NUCLEOTIDE SEQUENCE [GENOMIC DNA / MRNA]</scope>
    <scope>FUNCTION</scope>
    <scope>DISRUPTION PHENOTYPE</scope>
    <scope>MUTAGENESIS OF GLY-272</scope>
    <scope>TOPOLOGY</scope>
    <scope>SUBCELLULAR LOCATION</scope>
    <scope>TISSUE SPECIFICITY</scope>
    <source>
        <strain>cv. Columbia</strain>
    </source>
</reference>
<reference key="2">
    <citation type="journal article" date="1998" name="DNA Res.">
        <title>Structural analysis of Arabidopsis thaliana chromosome 5. VI. Sequence features of the regions of 1,367,185 bp covered by 19 physically assigned P1 and TAC clones.</title>
        <authorList>
            <person name="Kotani H."/>
            <person name="Nakamura Y."/>
            <person name="Sato S."/>
            <person name="Asamizu E."/>
            <person name="Kaneko T."/>
            <person name="Miyajima N."/>
            <person name="Tabata S."/>
        </authorList>
    </citation>
    <scope>NUCLEOTIDE SEQUENCE [LARGE SCALE GENOMIC DNA]</scope>
    <source>
        <strain>cv. Columbia</strain>
    </source>
</reference>
<reference key="3">
    <citation type="journal article" date="2017" name="Plant J.">
        <title>Araport11: a complete reannotation of the Arabidopsis thaliana reference genome.</title>
        <authorList>
            <person name="Cheng C.Y."/>
            <person name="Krishnakumar V."/>
            <person name="Chan A.P."/>
            <person name="Thibaud-Nissen F."/>
            <person name="Schobel S."/>
            <person name="Town C.D."/>
        </authorList>
    </citation>
    <scope>GENOME REANNOTATION</scope>
    <source>
        <strain>cv. Columbia</strain>
    </source>
</reference>
<reference key="4">
    <citation type="submission" date="2002-03" db="EMBL/GenBank/DDBJ databases">
        <title>Full-length cDNA from Arabidopsis thaliana.</title>
        <authorList>
            <person name="Brover V.V."/>
            <person name="Troukhan M.E."/>
            <person name="Alexandrov N.A."/>
            <person name="Lu Y.-P."/>
            <person name="Flavell R.B."/>
            <person name="Feldmann K.A."/>
        </authorList>
    </citation>
    <scope>NUCLEOTIDE SEQUENCE [LARGE SCALE MRNA]</scope>
</reference>
<reference key="5">
    <citation type="submission" date="2005-03" db="EMBL/GenBank/DDBJ databases">
        <title>Large-scale analysis of RIKEN Arabidopsis full-length (RAFL) cDNAs.</title>
        <authorList>
            <person name="Totoki Y."/>
            <person name="Seki M."/>
            <person name="Ishida J."/>
            <person name="Nakajima M."/>
            <person name="Enju A."/>
            <person name="Kamiya A."/>
            <person name="Narusaka M."/>
            <person name="Shin-i T."/>
            <person name="Nakagawa M."/>
            <person name="Sakamoto N."/>
            <person name="Oishi K."/>
            <person name="Kohara Y."/>
            <person name="Kobayashi M."/>
            <person name="Toyoda A."/>
            <person name="Sakaki Y."/>
            <person name="Sakurai T."/>
            <person name="Iida K."/>
            <person name="Akiyama K."/>
            <person name="Satou M."/>
            <person name="Toyoda T."/>
            <person name="Konagaya A."/>
            <person name="Carninci P."/>
            <person name="Kawai J."/>
            <person name="Hayashizaki Y."/>
            <person name="Shinozaki K."/>
        </authorList>
    </citation>
    <scope>NUCLEOTIDE SEQUENCE [LARGE SCALE MRNA]</scope>
    <source>
        <strain>cv. Columbia</strain>
    </source>
</reference>
<reference key="6">
    <citation type="submission" date="2006-02" db="EMBL/GenBank/DDBJ databases">
        <title>Arabidopsis ORF clones.</title>
        <authorList>
            <person name="Shinn P."/>
            <person name="Chen H."/>
            <person name="Kim C.J."/>
            <person name="Ecker J.R."/>
        </authorList>
    </citation>
    <scope>NUCLEOTIDE SEQUENCE [LARGE SCALE MRNA]</scope>
    <source>
        <strain>cv. Columbia</strain>
    </source>
</reference>
<reference key="7">
    <citation type="journal article" date="2009" name="Plant J.">
        <title>PARC6, a novel chloroplast division factor, influences FtsZ assembly and is required for recruitment of PDV1 during chloroplast division in Arabidopsis.</title>
        <authorList>
            <person name="Glynn J.M."/>
            <person name="Yang Y."/>
            <person name="Vitha S."/>
            <person name="Schmitz A.J."/>
            <person name="Hemmes M."/>
            <person name="Miyagishima S.-Y."/>
            <person name="Osteryoung K.W."/>
        </authorList>
    </citation>
    <scope>SUBCELLULAR LOCATION</scope>
</reference>
<reference key="8">
    <citation type="journal article" date="2012" name="Plant J.">
        <title>Gibberellin indirectly promotes chloroplast biogenesis as a means to maintain the chloroplast population of expanded cells.</title>
        <authorList>
            <person name="Jiang X."/>
            <person name="Li H."/>
            <person name="Wang T."/>
            <person name="Peng C."/>
            <person name="Wang H."/>
            <person name="Wu H."/>
            <person name="Wang X."/>
        </authorList>
    </citation>
    <scope>INDUCTION BY GIBBERELLIC ACID</scope>
</reference>
<reference key="9">
    <citation type="journal article" date="2015" name="Plant Cell">
        <title>Phosphatidylinositol 4-phosphate negatively regulates chloroplast division in Arabidopsis.</title>
        <authorList>
            <person name="Okazaki K."/>
            <person name="Miyagishima S.-Y."/>
            <person name="Wada H."/>
        </authorList>
    </citation>
    <scope>FUNCTION</scope>
    <source>
        <strain>cv. Columbia</strain>
    </source>
</reference>
<reference key="10">
    <citation type="journal article" date="2016" name="Plant Physiol.">
        <title>Roles of Arabidopsis PARC6 in Coordination of the Chloroplast Division Complex and Negative Regulation of FtsZ Assembly.</title>
        <authorList>
            <person name="Zhang M."/>
            <person name="Chen C."/>
            <person name="Froehlich J.E."/>
            <person name="TerBush A.D."/>
            <person name="Osteryoung K.W."/>
        </authorList>
    </citation>
    <scope>MUTAGENESIS OF GLY-272</scope>
    <scope>INTERACTION WITH CDP1/PARC6</scope>
    <source>
        <strain>cv. Columbia</strain>
    </source>
</reference>
<reference key="11">
    <citation type="journal article" date="2020" name="Plant Physiol.">
        <title>PDV1 and PDV2 differentially affect remodeling and assembly of the chloroplast DRP5B ring.</title>
        <authorList>
            <person name="Sun B."/>
            <person name="Zhang Q.-Y."/>
            <person name="Yuan H."/>
            <person name="Gao W."/>
            <person name="Han B."/>
            <person name="Zhang M."/>
        </authorList>
    </citation>
    <scope>FUNCTION</scope>
    <scope>DISRUPTION PHENOTYPE</scope>
    <scope>SUBCELLULAR LOCATION</scope>
    <scope>INTERACTION WITH ARC5/DRP5B</scope>
    <source>
        <strain>cv. Columbia</strain>
        <strain>cv. Landsberg erecta</strain>
    </source>
</reference>
<reference key="12">
    <citation type="submission" date="2016-12" db="PDB data bank">
        <title>Cocrystal structure of the intermembrane space region of the plastid division proteins PARC6 and PDV1.</title>
        <authorList>
            <person name="Delmar J.A."/>
            <person name="Yu E.W."/>
            <person name="Osteryoung K.W."/>
        </authorList>
    </citation>
    <scope>X-RAY CRYSTALLOGRAPHY (3.37 ANGSTROMS) OF 248-272</scope>
</reference>
<reference key="13">
    <citation type="submission" date="2019-05" db="PDB data bank">
        <title>Structure of PARC6 and PDV1 complex from Arabidopsis thaliana.</title>
        <authorList>
            <person name="Feng Y."/>
            <person name="Liu Z."/>
        </authorList>
    </citation>
    <scope>X-RAY CRYSTALLOGRAPHY (2.89 ANGSTROMS) OF 263-272</scope>
</reference>
<sequence>MGEMEIEEIEAVLEKIWDLHDKLSDEIHLISKSHFLKSVKPSNRSEKRKNPHGNSGEDKRPGYVFIKGFAVDDNDSTIQEAKSLNAIRTALENLEDQLEFFHTIHTQQRTEKDVAIARLEQSRILLAMRLAEHHGKNYGVLEEALAFVGSIKSNSHYVSPDHLYDSSRNPDGANSIPDGIESNFVINAFASTFGFAKRALGFNHVKGVLGNAAIFAISVVAMLHLHQVATSEHHLQKKEDRFYRSQQRKTYGRDKSSADRSLDHLDVMMARG</sequence>
<gene>
    <name evidence="9" type="primary">PDV1</name>
    <name evidence="11" type="ordered locus">At5g53280</name>
    <name evidence="12" type="ORF">K19E1.8</name>
</gene>